<feature type="chain" id="PRO_1000139915" description="HPr kinase/phosphorylase">
    <location>
        <begin position="1"/>
        <end position="305"/>
    </location>
</feature>
<feature type="region of interest" description="Important for the catalytic mechanism of both phosphorylation and dephosphorylation" evidence="1">
    <location>
        <begin position="201"/>
        <end position="210"/>
    </location>
</feature>
<feature type="region of interest" description="Important for the catalytic mechanism of dephosphorylation" evidence="1">
    <location>
        <begin position="264"/>
        <end position="269"/>
    </location>
</feature>
<feature type="active site" evidence="1">
    <location>
        <position position="138"/>
    </location>
</feature>
<feature type="active site" evidence="1">
    <location>
        <position position="159"/>
    </location>
</feature>
<feature type="active site" description="Proton acceptor; for phosphorylation activity. Proton donor; for dephosphorylation activity" evidence="1">
    <location>
        <position position="177"/>
    </location>
</feature>
<feature type="active site" evidence="1">
    <location>
        <position position="243"/>
    </location>
</feature>
<feature type="binding site" evidence="1">
    <location>
        <begin position="153"/>
        <end position="160"/>
    </location>
    <ligand>
        <name>ATP</name>
        <dbReference type="ChEBI" id="CHEBI:30616"/>
    </ligand>
</feature>
<feature type="binding site" evidence="1">
    <location>
        <position position="160"/>
    </location>
    <ligand>
        <name>Mg(2+)</name>
        <dbReference type="ChEBI" id="CHEBI:18420"/>
    </ligand>
</feature>
<feature type="binding site" evidence="1">
    <location>
        <position position="202"/>
    </location>
    <ligand>
        <name>Mg(2+)</name>
        <dbReference type="ChEBI" id="CHEBI:18420"/>
    </ligand>
</feature>
<accession>B0K793</accession>
<name>HPRK_THEP3</name>
<proteinExistence type="inferred from homology"/>
<sequence>MDKIPVETLIKDLNLEVIVEAKNNKIDITTSDVNRPGLQFSGFYEHFAYERVQIIGKVETTFIEQLPDDVLAERADRFFNYPIPCLIVTRDLNIRQEIIDAAQKHDRYLLRTKEASTKFINRLINYLDEKLAPQITIHGDLVDVYGIGVLLLGESGIGKSETALELIKRGHRLVADDAVEISKISEDKLQGSSPEIIRHFIEIRGIGILDIKTLYGVGSVRNSMNIDLVIQLEEWDEDKYYDRLGLEDDYIKFLDVKVPKLTIPVRPGRNLAIIVEVAAMNHRQKQMGYNAAHELNKKLLKQIGN</sequence>
<dbReference type="EC" id="2.7.11.-" evidence="1"/>
<dbReference type="EC" id="2.7.4.-" evidence="1"/>
<dbReference type="EMBL" id="CP000924">
    <property type="protein sequence ID" value="ABY94240.1"/>
    <property type="molecule type" value="Genomic_DNA"/>
</dbReference>
<dbReference type="RefSeq" id="WP_009052761.1">
    <property type="nucleotide sequence ID" value="NC_010321.1"/>
</dbReference>
<dbReference type="SMR" id="B0K793"/>
<dbReference type="STRING" id="340099.Teth39_0576"/>
<dbReference type="KEGG" id="tpd:Teth39_0576"/>
<dbReference type="eggNOG" id="COG1493">
    <property type="taxonomic scope" value="Bacteria"/>
</dbReference>
<dbReference type="HOGENOM" id="CLU_052030_0_1_9"/>
<dbReference type="Proteomes" id="UP000002156">
    <property type="component" value="Chromosome"/>
</dbReference>
<dbReference type="GO" id="GO:0005524">
    <property type="term" value="F:ATP binding"/>
    <property type="evidence" value="ECO:0007669"/>
    <property type="project" value="UniProtKB-UniRule"/>
</dbReference>
<dbReference type="GO" id="GO:0000287">
    <property type="term" value="F:magnesium ion binding"/>
    <property type="evidence" value="ECO:0007669"/>
    <property type="project" value="UniProtKB-UniRule"/>
</dbReference>
<dbReference type="GO" id="GO:0000155">
    <property type="term" value="F:phosphorelay sensor kinase activity"/>
    <property type="evidence" value="ECO:0007669"/>
    <property type="project" value="InterPro"/>
</dbReference>
<dbReference type="GO" id="GO:0004674">
    <property type="term" value="F:protein serine/threonine kinase activity"/>
    <property type="evidence" value="ECO:0007669"/>
    <property type="project" value="UniProtKB-KW"/>
</dbReference>
<dbReference type="GO" id="GO:0004712">
    <property type="term" value="F:protein serine/threonine/tyrosine kinase activity"/>
    <property type="evidence" value="ECO:0007669"/>
    <property type="project" value="UniProtKB-UniRule"/>
</dbReference>
<dbReference type="GO" id="GO:0006109">
    <property type="term" value="P:regulation of carbohydrate metabolic process"/>
    <property type="evidence" value="ECO:0007669"/>
    <property type="project" value="UniProtKB-UniRule"/>
</dbReference>
<dbReference type="CDD" id="cd01918">
    <property type="entry name" value="HprK_C"/>
    <property type="match status" value="1"/>
</dbReference>
<dbReference type="FunFam" id="3.40.50.300:FF:000174">
    <property type="entry name" value="HPr kinase/phosphorylase"/>
    <property type="match status" value="1"/>
</dbReference>
<dbReference type="Gene3D" id="3.40.1390.20">
    <property type="entry name" value="HprK N-terminal domain-like"/>
    <property type="match status" value="1"/>
</dbReference>
<dbReference type="Gene3D" id="3.40.50.300">
    <property type="entry name" value="P-loop containing nucleotide triphosphate hydrolases"/>
    <property type="match status" value="1"/>
</dbReference>
<dbReference type="HAMAP" id="MF_01249">
    <property type="entry name" value="HPr_kinase"/>
    <property type="match status" value="1"/>
</dbReference>
<dbReference type="InterPro" id="IPR003755">
    <property type="entry name" value="HPr(Ser)_kin/Pase"/>
</dbReference>
<dbReference type="InterPro" id="IPR011104">
    <property type="entry name" value="Hpr_kin/Pase_C"/>
</dbReference>
<dbReference type="InterPro" id="IPR011126">
    <property type="entry name" value="Hpr_kin/Pase_Hpr_N"/>
</dbReference>
<dbReference type="InterPro" id="IPR027417">
    <property type="entry name" value="P-loop_NTPase"/>
</dbReference>
<dbReference type="InterPro" id="IPR028979">
    <property type="entry name" value="Ser_kin/Pase_Hpr-like_N_sf"/>
</dbReference>
<dbReference type="NCBIfam" id="TIGR00679">
    <property type="entry name" value="hpr-ser"/>
    <property type="match status" value="1"/>
</dbReference>
<dbReference type="PANTHER" id="PTHR30305:SF1">
    <property type="entry name" value="HPR KINASE_PHOSPHORYLASE"/>
    <property type="match status" value="1"/>
</dbReference>
<dbReference type="PANTHER" id="PTHR30305">
    <property type="entry name" value="PROTEIN YJDM-RELATED"/>
    <property type="match status" value="1"/>
</dbReference>
<dbReference type="Pfam" id="PF07475">
    <property type="entry name" value="Hpr_kinase_C"/>
    <property type="match status" value="1"/>
</dbReference>
<dbReference type="Pfam" id="PF02603">
    <property type="entry name" value="Hpr_kinase_N"/>
    <property type="match status" value="1"/>
</dbReference>
<dbReference type="SUPFAM" id="SSF75138">
    <property type="entry name" value="HprK N-terminal domain-like"/>
    <property type="match status" value="1"/>
</dbReference>
<dbReference type="SUPFAM" id="SSF53795">
    <property type="entry name" value="PEP carboxykinase-like"/>
    <property type="match status" value="1"/>
</dbReference>
<comment type="function">
    <text evidence="1">Catalyzes the ATP- as well as the pyrophosphate-dependent phosphorylation of a specific serine residue in HPr, a phosphocarrier protein of the phosphoenolpyruvate-dependent sugar phosphotransferase system (PTS). HprK/P also catalyzes the pyrophosphate-producing, inorganic phosphate-dependent dephosphorylation (phosphorolysis) of seryl-phosphorylated HPr (P-Ser-HPr). The two antagonistic activities of HprK/P are regulated by several intracellular metabolites, which change their concentration in response to the absence or presence of rapidly metabolisable carbon sources (glucose, fructose, etc.) in the growth medium. Therefore, by controlling the phosphorylation state of HPr, HPrK/P is a sensor enzyme that plays a major role in the regulation of carbon metabolism and sugar transport: it mediates carbon catabolite repression (CCR), and regulates PTS-catalyzed carbohydrate uptake and inducer exclusion.</text>
</comment>
<comment type="catalytic activity">
    <reaction evidence="1">
        <text>[HPr protein]-L-serine + ATP = [HPr protein]-O-phospho-L-serine + ADP + H(+)</text>
        <dbReference type="Rhea" id="RHEA:46600"/>
        <dbReference type="Rhea" id="RHEA-COMP:11602"/>
        <dbReference type="Rhea" id="RHEA-COMP:11603"/>
        <dbReference type="ChEBI" id="CHEBI:15378"/>
        <dbReference type="ChEBI" id="CHEBI:29999"/>
        <dbReference type="ChEBI" id="CHEBI:30616"/>
        <dbReference type="ChEBI" id="CHEBI:83421"/>
        <dbReference type="ChEBI" id="CHEBI:456216"/>
    </reaction>
</comment>
<comment type="catalytic activity">
    <reaction evidence="1">
        <text>[HPr protein]-O-phospho-L-serine + phosphate + H(+) = [HPr protein]-L-serine + diphosphate</text>
        <dbReference type="Rhea" id="RHEA:46604"/>
        <dbReference type="Rhea" id="RHEA-COMP:11602"/>
        <dbReference type="Rhea" id="RHEA-COMP:11603"/>
        <dbReference type="ChEBI" id="CHEBI:15378"/>
        <dbReference type="ChEBI" id="CHEBI:29999"/>
        <dbReference type="ChEBI" id="CHEBI:33019"/>
        <dbReference type="ChEBI" id="CHEBI:43474"/>
        <dbReference type="ChEBI" id="CHEBI:83421"/>
    </reaction>
</comment>
<comment type="cofactor">
    <cofactor evidence="1">
        <name>Mg(2+)</name>
        <dbReference type="ChEBI" id="CHEBI:18420"/>
    </cofactor>
</comment>
<comment type="subunit">
    <text evidence="1">Homohexamer.</text>
</comment>
<comment type="domain">
    <text evidence="1">The Walker A ATP-binding motif also binds Pi and PPi.</text>
</comment>
<comment type="miscellaneous">
    <text evidence="1">Both phosphorylation and phosphorolysis are carried out by the same active site and suggest a common mechanism for both reactions.</text>
</comment>
<comment type="similarity">
    <text evidence="1">Belongs to the HPrK/P family.</text>
</comment>
<evidence type="ECO:0000255" key="1">
    <source>
        <dbReference type="HAMAP-Rule" id="MF_01249"/>
    </source>
</evidence>
<reference key="1">
    <citation type="submission" date="2008-01" db="EMBL/GenBank/DDBJ databases">
        <title>Complete sequence of Thermoanaerobacter pseudethanolicus 39E.</title>
        <authorList>
            <person name="Copeland A."/>
            <person name="Lucas S."/>
            <person name="Lapidus A."/>
            <person name="Barry K."/>
            <person name="Glavina del Rio T."/>
            <person name="Dalin E."/>
            <person name="Tice H."/>
            <person name="Pitluck S."/>
            <person name="Bruce D."/>
            <person name="Goodwin L."/>
            <person name="Saunders E."/>
            <person name="Brettin T."/>
            <person name="Detter J.C."/>
            <person name="Han C."/>
            <person name="Schmutz J."/>
            <person name="Larimer F."/>
            <person name="Land M."/>
            <person name="Hauser L."/>
            <person name="Kyrpides N."/>
            <person name="Lykidis A."/>
            <person name="Hemme C."/>
            <person name="Fields M.W."/>
            <person name="He Z."/>
            <person name="Zhou J."/>
            <person name="Richardson P."/>
        </authorList>
    </citation>
    <scope>NUCLEOTIDE SEQUENCE [LARGE SCALE GENOMIC DNA]</scope>
    <source>
        <strain>ATCC 33223 / DSM 2355 / 39E</strain>
    </source>
</reference>
<organism>
    <name type="scientific">Thermoanaerobacter pseudethanolicus (strain ATCC 33223 / 39E)</name>
    <name type="common">Clostridium thermohydrosulfuricum</name>
    <dbReference type="NCBI Taxonomy" id="340099"/>
    <lineage>
        <taxon>Bacteria</taxon>
        <taxon>Bacillati</taxon>
        <taxon>Bacillota</taxon>
        <taxon>Clostridia</taxon>
        <taxon>Thermoanaerobacterales</taxon>
        <taxon>Thermoanaerobacteraceae</taxon>
        <taxon>Thermoanaerobacter</taxon>
    </lineage>
</organism>
<protein>
    <recommendedName>
        <fullName evidence="1">HPr kinase/phosphorylase</fullName>
        <shortName evidence="1">HPrK/P</shortName>
        <ecNumber evidence="1">2.7.11.-</ecNumber>
        <ecNumber evidence="1">2.7.4.-</ecNumber>
    </recommendedName>
    <alternativeName>
        <fullName evidence="1">HPr(Ser) kinase/phosphorylase</fullName>
    </alternativeName>
</protein>
<keyword id="KW-0067">ATP-binding</keyword>
<keyword id="KW-0119">Carbohydrate metabolism</keyword>
<keyword id="KW-0418">Kinase</keyword>
<keyword id="KW-0460">Magnesium</keyword>
<keyword id="KW-0479">Metal-binding</keyword>
<keyword id="KW-0511">Multifunctional enzyme</keyword>
<keyword id="KW-0547">Nucleotide-binding</keyword>
<keyword id="KW-1185">Reference proteome</keyword>
<keyword id="KW-0723">Serine/threonine-protein kinase</keyword>
<keyword id="KW-0808">Transferase</keyword>
<gene>
    <name evidence="1" type="primary">hprK</name>
    <name type="ordered locus">Teth39_0576</name>
</gene>